<evidence type="ECO:0000255" key="1">
    <source>
        <dbReference type="HAMAP-Rule" id="MF_01328"/>
    </source>
</evidence>
<evidence type="ECO:0000256" key="2">
    <source>
        <dbReference type="SAM" id="MobiDB-lite"/>
    </source>
</evidence>
<evidence type="ECO:0000305" key="3"/>
<reference key="1">
    <citation type="journal article" date="2008" name="BMC Genomics">
        <title>Comparative genomic analysis of the gut bacterium Bifidobacterium longum reveals loci susceptible to deletion during pure culture growth.</title>
        <authorList>
            <person name="Lee J.H."/>
            <person name="Karamychev V.N."/>
            <person name="Kozyavkin S.A."/>
            <person name="Mills D."/>
            <person name="Pavlov A.R."/>
            <person name="Pavlova N.V."/>
            <person name="Polouchine N.N."/>
            <person name="Richardson P.M."/>
            <person name="Shakhova V.V."/>
            <person name="Slesarev A.I."/>
            <person name="Weimer B."/>
            <person name="O'Sullivan D.J."/>
        </authorList>
    </citation>
    <scope>NUCLEOTIDE SEQUENCE [LARGE SCALE GENOMIC DNA]</scope>
    <source>
        <strain>DJO10A</strain>
    </source>
</reference>
<proteinExistence type="inferred from homology"/>
<comment type="function">
    <text evidence="1">One of the primary rRNA binding proteins, this protein initially binds near the 5'-end of the 23S rRNA. It is important during the early stages of 50S assembly. It makes multiple contacts with different domains of the 23S rRNA in the assembled 50S subunit and ribosome.</text>
</comment>
<comment type="function">
    <text evidence="1">Forms part of the polypeptide exit tunnel.</text>
</comment>
<comment type="subunit">
    <text evidence="1">Part of the 50S ribosomal subunit.</text>
</comment>
<comment type="similarity">
    <text evidence="1">Belongs to the universal ribosomal protein uL4 family.</text>
</comment>
<sequence length="218" mass="23505">MANVTLNVTDAKGQATGTVEAPEALFGVSAEDVQAHIPLIHQVVTAQLAAARQGTHATKTRGMVSGGGKKPWKQKGTGRARQGSIRAPQWYHGGTVFGPQPRDYSQRTPKKMKAAALRYALSDRANAGRVAVVEFGITEPSTKAAVAALAPITADKFTTVVFTRDNINEWLSVRNIPTVHPIFVDQLNTYDVITSQYVVFTKEAFEAFVAAKTEPKEA</sequence>
<dbReference type="EMBL" id="CP000605">
    <property type="protein sequence ID" value="ACD99153.1"/>
    <property type="molecule type" value="Genomic_DNA"/>
</dbReference>
<dbReference type="RefSeq" id="WP_007053032.1">
    <property type="nucleotide sequence ID" value="NZ_AABM02000025.1"/>
</dbReference>
<dbReference type="SMR" id="B3DQ14"/>
<dbReference type="GeneID" id="69578896"/>
<dbReference type="KEGG" id="blj:BLD_1708"/>
<dbReference type="HOGENOM" id="CLU_041575_5_0_11"/>
<dbReference type="Proteomes" id="UP000002419">
    <property type="component" value="Chromosome"/>
</dbReference>
<dbReference type="GO" id="GO:1990904">
    <property type="term" value="C:ribonucleoprotein complex"/>
    <property type="evidence" value="ECO:0007669"/>
    <property type="project" value="UniProtKB-KW"/>
</dbReference>
<dbReference type="GO" id="GO:0005840">
    <property type="term" value="C:ribosome"/>
    <property type="evidence" value="ECO:0007669"/>
    <property type="project" value="UniProtKB-KW"/>
</dbReference>
<dbReference type="GO" id="GO:0019843">
    <property type="term" value="F:rRNA binding"/>
    <property type="evidence" value="ECO:0007669"/>
    <property type="project" value="UniProtKB-UniRule"/>
</dbReference>
<dbReference type="GO" id="GO:0003735">
    <property type="term" value="F:structural constituent of ribosome"/>
    <property type="evidence" value="ECO:0007669"/>
    <property type="project" value="InterPro"/>
</dbReference>
<dbReference type="GO" id="GO:0006412">
    <property type="term" value="P:translation"/>
    <property type="evidence" value="ECO:0007669"/>
    <property type="project" value="UniProtKB-UniRule"/>
</dbReference>
<dbReference type="FunFam" id="3.40.1370.10:FF:000004">
    <property type="entry name" value="50S ribosomal protein L4"/>
    <property type="match status" value="1"/>
</dbReference>
<dbReference type="Gene3D" id="3.40.1370.10">
    <property type="match status" value="1"/>
</dbReference>
<dbReference type="HAMAP" id="MF_01328_B">
    <property type="entry name" value="Ribosomal_uL4_B"/>
    <property type="match status" value="1"/>
</dbReference>
<dbReference type="InterPro" id="IPR002136">
    <property type="entry name" value="Ribosomal_uL4"/>
</dbReference>
<dbReference type="InterPro" id="IPR013005">
    <property type="entry name" value="Ribosomal_uL4-like"/>
</dbReference>
<dbReference type="InterPro" id="IPR023574">
    <property type="entry name" value="Ribosomal_uL4_dom_sf"/>
</dbReference>
<dbReference type="NCBIfam" id="TIGR03953">
    <property type="entry name" value="rplD_bact"/>
    <property type="match status" value="1"/>
</dbReference>
<dbReference type="PANTHER" id="PTHR10746">
    <property type="entry name" value="50S RIBOSOMAL PROTEIN L4"/>
    <property type="match status" value="1"/>
</dbReference>
<dbReference type="PANTHER" id="PTHR10746:SF6">
    <property type="entry name" value="LARGE RIBOSOMAL SUBUNIT PROTEIN UL4M"/>
    <property type="match status" value="1"/>
</dbReference>
<dbReference type="Pfam" id="PF00573">
    <property type="entry name" value="Ribosomal_L4"/>
    <property type="match status" value="1"/>
</dbReference>
<dbReference type="SUPFAM" id="SSF52166">
    <property type="entry name" value="Ribosomal protein L4"/>
    <property type="match status" value="1"/>
</dbReference>
<name>RL4_BIFLD</name>
<keyword id="KW-0687">Ribonucleoprotein</keyword>
<keyword id="KW-0689">Ribosomal protein</keyword>
<keyword id="KW-0694">RNA-binding</keyword>
<keyword id="KW-0699">rRNA-binding</keyword>
<accession>B3DQ14</accession>
<protein>
    <recommendedName>
        <fullName evidence="1">Large ribosomal subunit protein uL4</fullName>
    </recommendedName>
    <alternativeName>
        <fullName evidence="3">50S ribosomal protein L4</fullName>
    </alternativeName>
</protein>
<organism>
    <name type="scientific">Bifidobacterium longum (strain DJO10A)</name>
    <dbReference type="NCBI Taxonomy" id="205913"/>
    <lineage>
        <taxon>Bacteria</taxon>
        <taxon>Bacillati</taxon>
        <taxon>Actinomycetota</taxon>
        <taxon>Actinomycetes</taxon>
        <taxon>Bifidobacteriales</taxon>
        <taxon>Bifidobacteriaceae</taxon>
        <taxon>Bifidobacterium</taxon>
    </lineage>
</organism>
<gene>
    <name evidence="1" type="primary">rplD</name>
    <name type="ordered locus">BLD_1708</name>
</gene>
<feature type="chain" id="PRO_1000142083" description="Large ribosomal subunit protein uL4">
    <location>
        <begin position="1"/>
        <end position="218"/>
    </location>
</feature>
<feature type="region of interest" description="Disordered" evidence="2">
    <location>
        <begin position="55"/>
        <end position="83"/>
    </location>
</feature>